<keyword id="KW-1185">Reference proteome</keyword>
<keyword id="KW-0677">Repeat</keyword>
<keyword id="KW-0804">Transcription</keyword>
<keyword id="KW-0805">Transcription regulation</keyword>
<accession>Q9SVD0</accession>
<feature type="chain" id="PRO_0000435712" description="Protein SMAX1-LIKE 3">
    <location>
        <begin position="1"/>
        <end position="815"/>
    </location>
</feature>
<feature type="domain" description="Clp R" evidence="2">
    <location>
        <begin position="8"/>
        <end position="171"/>
    </location>
</feature>
<feature type="region of interest" description="Repeat 1" evidence="2">
    <location>
        <begin position="12"/>
        <end position="80"/>
    </location>
</feature>
<feature type="region of interest" description="Repeat 2" evidence="2">
    <location>
        <begin position="99"/>
        <end position="171"/>
    </location>
</feature>
<feature type="region of interest" description="Disordered" evidence="3">
    <location>
        <begin position="750"/>
        <end position="769"/>
    </location>
</feature>
<feature type="short sequence motif" description="EAR" evidence="6">
    <location>
        <begin position="778"/>
        <end position="782"/>
    </location>
</feature>
<evidence type="ECO:0000250" key="1">
    <source>
        <dbReference type="UniProtKB" id="Q9FHH2"/>
    </source>
</evidence>
<evidence type="ECO:0000255" key="2">
    <source>
        <dbReference type="PROSITE-ProRule" id="PRU01251"/>
    </source>
</evidence>
<evidence type="ECO:0000256" key="3">
    <source>
        <dbReference type="SAM" id="MobiDB-lite"/>
    </source>
</evidence>
<evidence type="ECO:0000269" key="4">
    <source>
    </source>
</evidence>
<evidence type="ECO:0000303" key="5">
    <source>
    </source>
</evidence>
<evidence type="ECO:0000305" key="6"/>
<evidence type="ECO:0000312" key="7">
    <source>
        <dbReference type="Araport" id="AT3G52490"/>
    </source>
</evidence>
<evidence type="ECO:0000312" key="8">
    <source>
        <dbReference type="EMBL" id="CAB43425.1"/>
    </source>
</evidence>
<dbReference type="EMBL" id="AL050300">
    <property type="protein sequence ID" value="CAB43425.1"/>
    <property type="molecule type" value="Genomic_DNA"/>
</dbReference>
<dbReference type="EMBL" id="CP002686">
    <property type="protein sequence ID" value="AEE78951.1"/>
    <property type="molecule type" value="Genomic_DNA"/>
</dbReference>
<dbReference type="EMBL" id="BT011695">
    <property type="protein sequence ID" value="AAS49058.1"/>
    <property type="molecule type" value="mRNA"/>
</dbReference>
<dbReference type="PIR" id="T08450">
    <property type="entry name" value="T08450"/>
</dbReference>
<dbReference type="RefSeq" id="NP_190817.1">
    <property type="nucleotide sequence ID" value="NM_115109.4"/>
</dbReference>
<dbReference type="FunCoup" id="Q9SVD0">
    <property type="interactions" value="705"/>
</dbReference>
<dbReference type="STRING" id="3702.Q9SVD0"/>
<dbReference type="iPTMnet" id="Q9SVD0"/>
<dbReference type="PaxDb" id="3702-AT3G52490.1"/>
<dbReference type="ProteomicsDB" id="234475"/>
<dbReference type="EnsemblPlants" id="AT3G52490.1">
    <property type="protein sequence ID" value="AT3G52490.1"/>
    <property type="gene ID" value="AT3G52490"/>
</dbReference>
<dbReference type="GeneID" id="824414"/>
<dbReference type="Gramene" id="AT3G52490.1">
    <property type="protein sequence ID" value="AT3G52490.1"/>
    <property type="gene ID" value="AT3G52490"/>
</dbReference>
<dbReference type="KEGG" id="ath:AT3G52490"/>
<dbReference type="Araport" id="AT3G52490"/>
<dbReference type="TAIR" id="AT3G52490">
    <property type="gene designation" value="SMXL3"/>
</dbReference>
<dbReference type="eggNOG" id="KOG1051">
    <property type="taxonomic scope" value="Eukaryota"/>
</dbReference>
<dbReference type="HOGENOM" id="CLU_006575_0_0_1"/>
<dbReference type="InParanoid" id="Q9SVD0"/>
<dbReference type="OMA" id="WVADYRA"/>
<dbReference type="PhylomeDB" id="Q9SVD0"/>
<dbReference type="PRO" id="PR:Q9SVD0"/>
<dbReference type="Proteomes" id="UP000006548">
    <property type="component" value="Chromosome 3"/>
</dbReference>
<dbReference type="ExpressionAtlas" id="Q9SVD0">
    <property type="expression patterns" value="baseline and differential"/>
</dbReference>
<dbReference type="Gene3D" id="1.10.1780.10">
    <property type="entry name" value="Clp, N-terminal domain"/>
    <property type="match status" value="1"/>
</dbReference>
<dbReference type="Gene3D" id="3.40.50.300">
    <property type="entry name" value="P-loop containing nucleotide triphosphate hydrolases"/>
    <property type="match status" value="2"/>
</dbReference>
<dbReference type="InterPro" id="IPR036628">
    <property type="entry name" value="Clp_N_dom_sf"/>
</dbReference>
<dbReference type="InterPro" id="IPR004176">
    <property type="entry name" value="Clp_R_dom"/>
</dbReference>
<dbReference type="InterPro" id="IPR027417">
    <property type="entry name" value="P-loop_NTPase"/>
</dbReference>
<dbReference type="InterPro" id="IPR051650">
    <property type="entry name" value="SL_signaling_regulator"/>
</dbReference>
<dbReference type="PANTHER" id="PTHR43572">
    <property type="entry name" value="CHAPERONE PROTEIN CLPD, CHLOROPLASTIC"/>
    <property type="match status" value="1"/>
</dbReference>
<dbReference type="PANTHER" id="PTHR43572:SF31">
    <property type="entry name" value="PROTEIN SMAX1-LIKE 3"/>
    <property type="match status" value="1"/>
</dbReference>
<dbReference type="Pfam" id="PF02861">
    <property type="entry name" value="Clp_N"/>
    <property type="match status" value="2"/>
</dbReference>
<dbReference type="Pfam" id="PF23569">
    <property type="entry name" value="NBD_SMAX1"/>
    <property type="match status" value="1"/>
</dbReference>
<dbReference type="SUPFAM" id="SSF81923">
    <property type="entry name" value="Double Clp-N motif"/>
    <property type="match status" value="1"/>
</dbReference>
<dbReference type="SUPFAM" id="SSF52540">
    <property type="entry name" value="P-loop containing nucleoside triphosphate hydrolases"/>
    <property type="match status" value="1"/>
</dbReference>
<dbReference type="PROSITE" id="PS51903">
    <property type="entry name" value="CLP_R"/>
    <property type="match status" value="1"/>
</dbReference>
<gene>
    <name evidence="5" type="primary">SMXL3</name>
    <name evidence="7" type="ordered locus">At3g52490</name>
    <name evidence="8" type="ORF">F22O6.130</name>
</gene>
<protein>
    <recommendedName>
        <fullName evidence="5">Protein SMAX1-LIKE 3</fullName>
        <shortName evidence="5">AtSMXL3</shortName>
    </recommendedName>
</protein>
<name>SMXL3_ARATH</name>
<comment type="function">
    <text evidence="1">May function in a transcriptional corepressor complex.</text>
</comment>
<comment type="subunit">
    <text evidence="1">Interacts probably with TPL/TPR in an EAR-motif dependent manner.</text>
</comment>
<comment type="tissue specificity">
    <text evidence="4">Expressed in roots and seedlings.</text>
</comment>
<comment type="induction">
    <text evidence="4">Up-regulated by strigolactone treatment.</text>
</comment>
<comment type="similarity">
    <text evidence="6">Belongs to the ClpA/ClpB family.</text>
</comment>
<organism>
    <name type="scientific">Arabidopsis thaliana</name>
    <name type="common">Mouse-ear cress</name>
    <dbReference type="NCBI Taxonomy" id="3702"/>
    <lineage>
        <taxon>Eukaryota</taxon>
        <taxon>Viridiplantae</taxon>
        <taxon>Streptophyta</taxon>
        <taxon>Embryophyta</taxon>
        <taxon>Tracheophyta</taxon>
        <taxon>Spermatophyta</taxon>
        <taxon>Magnoliopsida</taxon>
        <taxon>eudicotyledons</taxon>
        <taxon>Gunneridae</taxon>
        <taxon>Pentapetalae</taxon>
        <taxon>rosids</taxon>
        <taxon>malvids</taxon>
        <taxon>Brassicales</taxon>
        <taxon>Brassicaceae</taxon>
        <taxon>Camelineae</taxon>
        <taxon>Arabidopsis</taxon>
    </lineage>
</organism>
<proteinExistence type="evidence at transcript level"/>
<reference key="1">
    <citation type="journal article" date="2000" name="Nature">
        <title>Sequence and analysis of chromosome 3 of the plant Arabidopsis thaliana.</title>
        <authorList>
            <person name="Salanoubat M."/>
            <person name="Lemcke K."/>
            <person name="Rieger M."/>
            <person name="Ansorge W."/>
            <person name="Unseld M."/>
            <person name="Fartmann B."/>
            <person name="Valle G."/>
            <person name="Bloecker H."/>
            <person name="Perez-Alonso M."/>
            <person name="Obermaier B."/>
            <person name="Delseny M."/>
            <person name="Boutry M."/>
            <person name="Grivell L.A."/>
            <person name="Mache R."/>
            <person name="Puigdomenech P."/>
            <person name="De Simone V."/>
            <person name="Choisne N."/>
            <person name="Artiguenave F."/>
            <person name="Robert C."/>
            <person name="Brottier P."/>
            <person name="Wincker P."/>
            <person name="Cattolico L."/>
            <person name="Weissenbach J."/>
            <person name="Saurin W."/>
            <person name="Quetier F."/>
            <person name="Schaefer M."/>
            <person name="Mueller-Auer S."/>
            <person name="Gabel C."/>
            <person name="Fuchs M."/>
            <person name="Benes V."/>
            <person name="Wurmbach E."/>
            <person name="Drzonek H."/>
            <person name="Erfle H."/>
            <person name="Jordan N."/>
            <person name="Bangert S."/>
            <person name="Wiedelmann R."/>
            <person name="Kranz H."/>
            <person name="Voss H."/>
            <person name="Holland R."/>
            <person name="Brandt P."/>
            <person name="Nyakatura G."/>
            <person name="Vezzi A."/>
            <person name="D'Angelo M."/>
            <person name="Pallavicini A."/>
            <person name="Toppo S."/>
            <person name="Simionati B."/>
            <person name="Conrad A."/>
            <person name="Hornischer K."/>
            <person name="Kauer G."/>
            <person name="Loehnert T.-H."/>
            <person name="Nordsiek G."/>
            <person name="Reichelt J."/>
            <person name="Scharfe M."/>
            <person name="Schoen O."/>
            <person name="Bargues M."/>
            <person name="Terol J."/>
            <person name="Climent J."/>
            <person name="Navarro P."/>
            <person name="Collado C."/>
            <person name="Perez-Perez A."/>
            <person name="Ottenwaelder B."/>
            <person name="Duchemin D."/>
            <person name="Cooke R."/>
            <person name="Laudie M."/>
            <person name="Berger-Llauro C."/>
            <person name="Purnelle B."/>
            <person name="Masuy D."/>
            <person name="de Haan M."/>
            <person name="Maarse A.C."/>
            <person name="Alcaraz J.-P."/>
            <person name="Cottet A."/>
            <person name="Casacuberta E."/>
            <person name="Monfort A."/>
            <person name="Argiriou A."/>
            <person name="Flores M."/>
            <person name="Liguori R."/>
            <person name="Vitale D."/>
            <person name="Mannhaupt G."/>
            <person name="Haase D."/>
            <person name="Schoof H."/>
            <person name="Rudd S."/>
            <person name="Zaccaria P."/>
            <person name="Mewes H.-W."/>
            <person name="Mayer K.F.X."/>
            <person name="Kaul S."/>
            <person name="Town C.D."/>
            <person name="Koo H.L."/>
            <person name="Tallon L.J."/>
            <person name="Jenkins J."/>
            <person name="Rooney T."/>
            <person name="Rizzo M."/>
            <person name="Walts A."/>
            <person name="Utterback T."/>
            <person name="Fujii C.Y."/>
            <person name="Shea T.P."/>
            <person name="Creasy T.H."/>
            <person name="Haas B."/>
            <person name="Maiti R."/>
            <person name="Wu D."/>
            <person name="Peterson J."/>
            <person name="Van Aken S."/>
            <person name="Pai G."/>
            <person name="Militscher J."/>
            <person name="Sellers P."/>
            <person name="Gill J.E."/>
            <person name="Feldblyum T.V."/>
            <person name="Preuss D."/>
            <person name="Lin X."/>
            <person name="Nierman W.C."/>
            <person name="Salzberg S.L."/>
            <person name="White O."/>
            <person name="Venter J.C."/>
            <person name="Fraser C.M."/>
            <person name="Kaneko T."/>
            <person name="Nakamura Y."/>
            <person name="Sato S."/>
            <person name="Kato T."/>
            <person name="Asamizu E."/>
            <person name="Sasamoto S."/>
            <person name="Kimura T."/>
            <person name="Idesawa K."/>
            <person name="Kawashima K."/>
            <person name="Kishida Y."/>
            <person name="Kiyokawa C."/>
            <person name="Kohara M."/>
            <person name="Matsumoto M."/>
            <person name="Matsuno A."/>
            <person name="Muraki A."/>
            <person name="Nakayama S."/>
            <person name="Nakazaki N."/>
            <person name="Shinpo S."/>
            <person name="Takeuchi C."/>
            <person name="Wada T."/>
            <person name="Watanabe A."/>
            <person name="Yamada M."/>
            <person name="Yasuda M."/>
            <person name="Tabata S."/>
        </authorList>
    </citation>
    <scope>NUCLEOTIDE SEQUENCE [LARGE SCALE GENOMIC DNA]</scope>
    <source>
        <strain>cv. Columbia</strain>
    </source>
</reference>
<reference key="2">
    <citation type="journal article" date="2017" name="Plant J.">
        <title>Araport11: a complete reannotation of the Arabidopsis thaliana reference genome.</title>
        <authorList>
            <person name="Cheng C.Y."/>
            <person name="Krishnakumar V."/>
            <person name="Chan A.P."/>
            <person name="Thibaud-Nissen F."/>
            <person name="Schobel S."/>
            <person name="Town C.D."/>
        </authorList>
    </citation>
    <scope>GENOME REANNOTATION</scope>
    <source>
        <strain>cv. Columbia</strain>
    </source>
</reference>
<reference key="3">
    <citation type="submission" date="2004-03" db="EMBL/GenBank/DDBJ databases">
        <title>Arabidopsis ORF clones.</title>
        <authorList>
            <person name="Cheuk R."/>
            <person name="Chen H."/>
            <person name="Kim C.J."/>
            <person name="Shinn P."/>
            <person name="Ecker J.R."/>
        </authorList>
    </citation>
    <scope>NUCLEOTIDE SEQUENCE [LARGE SCALE MRNA]</scope>
    <source>
        <strain>cv. Columbia</strain>
    </source>
</reference>
<reference key="4">
    <citation type="journal article" date="2013" name="Plant Physiol.">
        <title>SUPPRESSOR OF MORE AXILLARY GROWTH2 1 controls seed germination and seedling development in Arabidopsis.</title>
        <authorList>
            <person name="Stanga J.P."/>
            <person name="Smith S.M."/>
            <person name="Briggs W.R."/>
            <person name="Nelson D.C."/>
        </authorList>
    </citation>
    <scope>TISSUE SPECIFICITY</scope>
    <scope>INDUCTION BY STRIGOLACTONE</scope>
    <scope>GENE FAMILY</scope>
    <scope>NOMENCLATURE</scope>
</reference>
<reference key="5">
    <citation type="journal article" date="2014" name="Curr. Opin. Plant Biol.">
        <title>Strigolactone signalling: standing on the shoulders of DWARFs.</title>
        <authorList>
            <person name="Bennett T."/>
            <person name="Leyser O."/>
        </authorList>
    </citation>
    <scope>REVIEW</scope>
</reference>
<sequence>MRAGGCTVEQALTADAANVVKQAMGLARRRGHAQVTPLHVASTMLSAPTGLLRTACLQSHTHPLQCRALELCFNVALNRLPTSTGSPMLGVPTSPFPSISNALGAAFKRAQAHQRRGSIESQQQPILAVKIEVEQLIISILDDPSVSRVMREAGFSSPQVKTKVEQAVSLEICSKTTSSSKPKEGKLLTPVRNEDVMNVINNLVDKKRRNFVIVGECLATIDGVVKTVMEKVDKKDVPEVLKDVKFITLSFSSFGQPSRADVERKLEELETLVKSCVGKGVILNLGDLNWFVESRTRGSSLYNNNDSYCVVEHMIMEIGKLACGLVMGDHGRFWLMGLATSQTYVRCKSGQPSLESLWCLTTLTIPATSNSLRLSLVSESELEVKKSENVSLQLQQSSDQLSFCEECSVKFESEARFLKSSNSNVTTVALPAWLQQYKKENQNSHTDSDSIKELVVKWNSICDSIHKRPSLKTLTLSSPTSSFSGSTQPSISTLHHLQTNGDWPVIETNTHRHHSVVHETSHLRLFIPEHDSEQKTELVCSNPNSTMNSEASSSDAMELEHASSRFKEMNAENLATLCAALESKVPWQKDLVPELAKTVLKCRSGSSTRKINGNEDKKEDTWMFFQGLDVDAKEKIARELAKLVFGSQDSFVSICLSSFSSTRSDSAEDLRNKRLRDEQSLSYIERFSEAVSLDPNRVILVEDIEQADYLSQVGFKRAVERGRVCNSSGEEASLKDAIVILSCERFRSRSRACSPPSNQKSDGSDQPEDKNVATCVALDLNLSIDSAYVCEEESCDEIGLLEAVDARFHFKCSST</sequence>